<sequence length="66" mass="7820">MPKQKTHRASAKRFKRTGSGGLKRFRAFTSHRFHGKTKKQRRHLRKASMVHPGDFKRIKSMVSQMR</sequence>
<dbReference type="EMBL" id="CP000024">
    <property type="protein sequence ID" value="AAV62681.1"/>
    <property type="molecule type" value="Genomic_DNA"/>
</dbReference>
<dbReference type="RefSeq" id="WP_002950904.1">
    <property type="nucleotide sequence ID" value="NC_006449.1"/>
</dbReference>
<dbReference type="SMR" id="Q5LZL8"/>
<dbReference type="GeneID" id="66898929"/>
<dbReference type="KEGG" id="stc:str1133"/>
<dbReference type="HOGENOM" id="CLU_169643_3_0_9"/>
<dbReference type="GO" id="GO:0022625">
    <property type="term" value="C:cytosolic large ribosomal subunit"/>
    <property type="evidence" value="ECO:0007669"/>
    <property type="project" value="TreeGrafter"/>
</dbReference>
<dbReference type="GO" id="GO:0003735">
    <property type="term" value="F:structural constituent of ribosome"/>
    <property type="evidence" value="ECO:0007669"/>
    <property type="project" value="InterPro"/>
</dbReference>
<dbReference type="GO" id="GO:0006412">
    <property type="term" value="P:translation"/>
    <property type="evidence" value="ECO:0007669"/>
    <property type="project" value="UniProtKB-UniRule"/>
</dbReference>
<dbReference type="FunFam" id="4.10.410.60:FF:000001">
    <property type="entry name" value="50S ribosomal protein L35"/>
    <property type="match status" value="1"/>
</dbReference>
<dbReference type="Gene3D" id="4.10.410.60">
    <property type="match status" value="1"/>
</dbReference>
<dbReference type="HAMAP" id="MF_00514">
    <property type="entry name" value="Ribosomal_bL35"/>
    <property type="match status" value="1"/>
</dbReference>
<dbReference type="InterPro" id="IPR001706">
    <property type="entry name" value="Ribosomal_bL35"/>
</dbReference>
<dbReference type="InterPro" id="IPR021137">
    <property type="entry name" value="Ribosomal_bL35-like"/>
</dbReference>
<dbReference type="InterPro" id="IPR018265">
    <property type="entry name" value="Ribosomal_bL35_CS"/>
</dbReference>
<dbReference type="InterPro" id="IPR037229">
    <property type="entry name" value="Ribosomal_bL35_sf"/>
</dbReference>
<dbReference type="NCBIfam" id="TIGR00001">
    <property type="entry name" value="rpmI_bact"/>
    <property type="match status" value="1"/>
</dbReference>
<dbReference type="PANTHER" id="PTHR33343">
    <property type="entry name" value="54S RIBOSOMAL PROTEIN BL35M"/>
    <property type="match status" value="1"/>
</dbReference>
<dbReference type="PANTHER" id="PTHR33343:SF1">
    <property type="entry name" value="LARGE RIBOSOMAL SUBUNIT PROTEIN BL35M"/>
    <property type="match status" value="1"/>
</dbReference>
<dbReference type="Pfam" id="PF01632">
    <property type="entry name" value="Ribosomal_L35p"/>
    <property type="match status" value="1"/>
</dbReference>
<dbReference type="PRINTS" id="PR00064">
    <property type="entry name" value="RIBOSOMALL35"/>
</dbReference>
<dbReference type="SUPFAM" id="SSF143034">
    <property type="entry name" value="L35p-like"/>
    <property type="match status" value="1"/>
</dbReference>
<dbReference type="PROSITE" id="PS00936">
    <property type="entry name" value="RIBOSOMAL_L35"/>
    <property type="match status" value="1"/>
</dbReference>
<proteinExistence type="inferred from homology"/>
<reference key="1">
    <citation type="journal article" date="2004" name="Nat. Biotechnol.">
        <title>Complete sequence and comparative genome analysis of the dairy bacterium Streptococcus thermophilus.</title>
        <authorList>
            <person name="Bolotin A."/>
            <person name="Quinquis B."/>
            <person name="Renault P."/>
            <person name="Sorokin A."/>
            <person name="Ehrlich S.D."/>
            <person name="Kulakauskas S."/>
            <person name="Lapidus A."/>
            <person name="Goltsman E."/>
            <person name="Mazur M."/>
            <person name="Pusch G.D."/>
            <person name="Fonstein M."/>
            <person name="Overbeek R."/>
            <person name="Kyprides N."/>
            <person name="Purnelle B."/>
            <person name="Prozzi D."/>
            <person name="Ngui K."/>
            <person name="Masuy D."/>
            <person name="Hancy F."/>
            <person name="Burteau S."/>
            <person name="Boutry M."/>
            <person name="Delcour J."/>
            <person name="Goffeau A."/>
            <person name="Hols P."/>
        </authorList>
    </citation>
    <scope>NUCLEOTIDE SEQUENCE [LARGE SCALE GENOMIC DNA]</scope>
    <source>
        <strain>CNRZ 1066</strain>
    </source>
</reference>
<evidence type="ECO:0000255" key="1">
    <source>
        <dbReference type="HAMAP-Rule" id="MF_00514"/>
    </source>
</evidence>
<evidence type="ECO:0000256" key="2">
    <source>
        <dbReference type="SAM" id="MobiDB-lite"/>
    </source>
</evidence>
<evidence type="ECO:0000305" key="3"/>
<name>RL35_STRT1</name>
<feature type="chain" id="PRO_0000258768" description="Large ribosomal subunit protein bL35">
    <location>
        <begin position="1"/>
        <end position="66"/>
    </location>
</feature>
<feature type="region of interest" description="Disordered" evidence="2">
    <location>
        <begin position="1"/>
        <end position="20"/>
    </location>
</feature>
<feature type="compositionally biased region" description="Basic residues" evidence="2">
    <location>
        <begin position="1"/>
        <end position="16"/>
    </location>
</feature>
<keyword id="KW-0687">Ribonucleoprotein</keyword>
<keyword id="KW-0689">Ribosomal protein</keyword>
<protein>
    <recommendedName>
        <fullName evidence="1">Large ribosomal subunit protein bL35</fullName>
    </recommendedName>
    <alternativeName>
        <fullName evidence="3">50S ribosomal protein L35</fullName>
    </alternativeName>
</protein>
<comment type="similarity">
    <text evidence="1">Belongs to the bacterial ribosomal protein bL35 family.</text>
</comment>
<gene>
    <name evidence="1" type="primary">rpmI</name>
    <name type="ordered locus">str1133</name>
</gene>
<accession>Q5LZL8</accession>
<organism>
    <name type="scientific">Streptococcus thermophilus (strain CNRZ 1066)</name>
    <dbReference type="NCBI Taxonomy" id="299768"/>
    <lineage>
        <taxon>Bacteria</taxon>
        <taxon>Bacillati</taxon>
        <taxon>Bacillota</taxon>
        <taxon>Bacilli</taxon>
        <taxon>Lactobacillales</taxon>
        <taxon>Streptococcaceae</taxon>
        <taxon>Streptococcus</taxon>
    </lineage>
</organism>